<organism>
    <name type="scientific">Streptococcus pneumoniae serotype 19F (strain G54)</name>
    <dbReference type="NCBI Taxonomy" id="512566"/>
    <lineage>
        <taxon>Bacteria</taxon>
        <taxon>Bacillati</taxon>
        <taxon>Bacillota</taxon>
        <taxon>Bacilli</taxon>
        <taxon>Lactobacillales</taxon>
        <taxon>Streptococcaceae</taxon>
        <taxon>Streptococcus</taxon>
    </lineage>
</organism>
<evidence type="ECO:0000255" key="1">
    <source>
        <dbReference type="HAMAP-Rule" id="MF_01151"/>
    </source>
</evidence>
<evidence type="ECO:0000256" key="2">
    <source>
        <dbReference type="SAM" id="MobiDB-lite"/>
    </source>
</evidence>
<name>GRPE_STRP4</name>
<reference key="1">
    <citation type="journal article" date="2001" name="Microb. Drug Resist.">
        <title>Annotated draft genomic sequence from a Streptococcus pneumoniae type 19F clinical isolate.</title>
        <authorList>
            <person name="Dopazo J."/>
            <person name="Mendoza A."/>
            <person name="Herrero J."/>
            <person name="Caldara F."/>
            <person name="Humbert Y."/>
            <person name="Friedli L."/>
            <person name="Guerrier M."/>
            <person name="Grand-Schenk E."/>
            <person name="Gandin C."/>
            <person name="de Francesco M."/>
            <person name="Polissi A."/>
            <person name="Buell G."/>
            <person name="Feger G."/>
            <person name="Garcia E."/>
            <person name="Peitsch M."/>
            <person name="Garcia-Bustos J.F."/>
        </authorList>
    </citation>
    <scope>NUCLEOTIDE SEQUENCE [LARGE SCALE GENOMIC DNA]</scope>
    <source>
        <strain>G54</strain>
    </source>
</reference>
<reference key="2">
    <citation type="submission" date="2008-03" db="EMBL/GenBank/DDBJ databases">
        <title>Pneumococcal beta glucoside metabolism investigated by whole genome comparison.</title>
        <authorList>
            <person name="Mulas L."/>
            <person name="Trappetti C."/>
            <person name="Hakenbeck R."/>
            <person name="Iannelli F."/>
            <person name="Pozzi G."/>
            <person name="Davidsen T.M."/>
            <person name="Tettelin H."/>
            <person name="Oggioni M."/>
        </authorList>
    </citation>
    <scope>NUCLEOTIDE SEQUENCE [LARGE SCALE GENOMIC DNA]</scope>
    <source>
        <strain>G54</strain>
    </source>
</reference>
<accession>B5E231</accession>
<keyword id="KW-0143">Chaperone</keyword>
<keyword id="KW-0963">Cytoplasm</keyword>
<keyword id="KW-0346">Stress response</keyword>
<feature type="chain" id="PRO_1000137633" description="Protein GrpE">
    <location>
        <begin position="1"/>
        <end position="174"/>
    </location>
</feature>
<feature type="region of interest" description="Disordered" evidence="2">
    <location>
        <begin position="1"/>
        <end position="35"/>
    </location>
</feature>
<feature type="compositionally biased region" description="Acidic residues" evidence="2">
    <location>
        <begin position="9"/>
        <end position="25"/>
    </location>
</feature>
<feature type="compositionally biased region" description="Basic and acidic residues" evidence="2">
    <location>
        <begin position="26"/>
        <end position="35"/>
    </location>
</feature>
<protein>
    <recommendedName>
        <fullName evidence="1">Protein GrpE</fullName>
    </recommendedName>
    <alternativeName>
        <fullName evidence="1">HSP-70 cofactor</fullName>
    </alternativeName>
</protein>
<dbReference type="EMBL" id="CP001015">
    <property type="protein sequence ID" value="ACF55601.1"/>
    <property type="molecule type" value="Genomic_DNA"/>
</dbReference>
<dbReference type="SMR" id="B5E231"/>
<dbReference type="KEGG" id="spx:SPG_0467"/>
<dbReference type="HOGENOM" id="CLU_057217_6_3_9"/>
<dbReference type="GO" id="GO:0005737">
    <property type="term" value="C:cytoplasm"/>
    <property type="evidence" value="ECO:0007669"/>
    <property type="project" value="UniProtKB-SubCell"/>
</dbReference>
<dbReference type="GO" id="GO:0000774">
    <property type="term" value="F:adenyl-nucleotide exchange factor activity"/>
    <property type="evidence" value="ECO:0007669"/>
    <property type="project" value="InterPro"/>
</dbReference>
<dbReference type="GO" id="GO:0042803">
    <property type="term" value="F:protein homodimerization activity"/>
    <property type="evidence" value="ECO:0007669"/>
    <property type="project" value="InterPro"/>
</dbReference>
<dbReference type="GO" id="GO:0051087">
    <property type="term" value="F:protein-folding chaperone binding"/>
    <property type="evidence" value="ECO:0007669"/>
    <property type="project" value="InterPro"/>
</dbReference>
<dbReference type="GO" id="GO:0051082">
    <property type="term" value="F:unfolded protein binding"/>
    <property type="evidence" value="ECO:0007669"/>
    <property type="project" value="TreeGrafter"/>
</dbReference>
<dbReference type="GO" id="GO:0006457">
    <property type="term" value="P:protein folding"/>
    <property type="evidence" value="ECO:0007669"/>
    <property type="project" value="InterPro"/>
</dbReference>
<dbReference type="CDD" id="cd00446">
    <property type="entry name" value="GrpE"/>
    <property type="match status" value="1"/>
</dbReference>
<dbReference type="FunFam" id="2.30.22.10:FF:000004">
    <property type="entry name" value="Protein GrpE"/>
    <property type="match status" value="1"/>
</dbReference>
<dbReference type="FunFam" id="3.90.20.20:FF:000007">
    <property type="entry name" value="Protein GrpE"/>
    <property type="match status" value="1"/>
</dbReference>
<dbReference type="Gene3D" id="3.90.20.20">
    <property type="match status" value="1"/>
</dbReference>
<dbReference type="Gene3D" id="2.30.22.10">
    <property type="entry name" value="Head domain of nucleotide exchange factor GrpE"/>
    <property type="match status" value="1"/>
</dbReference>
<dbReference type="HAMAP" id="MF_01151">
    <property type="entry name" value="GrpE"/>
    <property type="match status" value="1"/>
</dbReference>
<dbReference type="InterPro" id="IPR000740">
    <property type="entry name" value="GrpE"/>
</dbReference>
<dbReference type="InterPro" id="IPR013805">
    <property type="entry name" value="GrpE_coiled_coil"/>
</dbReference>
<dbReference type="InterPro" id="IPR009012">
    <property type="entry name" value="GrpE_head"/>
</dbReference>
<dbReference type="NCBIfam" id="NF010738">
    <property type="entry name" value="PRK14140.1"/>
    <property type="match status" value="1"/>
</dbReference>
<dbReference type="NCBIfam" id="NF010753">
    <property type="entry name" value="PRK14156.1"/>
    <property type="match status" value="1"/>
</dbReference>
<dbReference type="NCBIfam" id="NF010759">
    <property type="entry name" value="PRK14162.1"/>
    <property type="match status" value="1"/>
</dbReference>
<dbReference type="PANTHER" id="PTHR21237">
    <property type="entry name" value="GRPE PROTEIN"/>
    <property type="match status" value="1"/>
</dbReference>
<dbReference type="PANTHER" id="PTHR21237:SF23">
    <property type="entry name" value="GRPE PROTEIN HOMOLOG, MITOCHONDRIAL"/>
    <property type="match status" value="1"/>
</dbReference>
<dbReference type="Pfam" id="PF01025">
    <property type="entry name" value="GrpE"/>
    <property type="match status" value="1"/>
</dbReference>
<dbReference type="PRINTS" id="PR00773">
    <property type="entry name" value="GRPEPROTEIN"/>
</dbReference>
<dbReference type="SUPFAM" id="SSF58014">
    <property type="entry name" value="Coiled-coil domain of nucleotide exchange factor GrpE"/>
    <property type="match status" value="1"/>
</dbReference>
<dbReference type="SUPFAM" id="SSF51064">
    <property type="entry name" value="Head domain of nucleotide exchange factor GrpE"/>
    <property type="match status" value="1"/>
</dbReference>
<dbReference type="PROSITE" id="PS01071">
    <property type="entry name" value="GRPE"/>
    <property type="match status" value="1"/>
</dbReference>
<gene>
    <name evidence="1" type="primary">grpE</name>
    <name type="ordered locus">SPG_0467</name>
</gene>
<sequence>MAQDIKNEEVEEVQEEEVVETAEETTPEKSELDLANERADEFENKYLRAHAEMQNIQRRANEERQNLQRYRSQDLAKAILPSLDNLERALAVEGLTDDVKKGLGMVQESLIHALKEEGIEEIAADGEFDHNYHMAIQTLPADDEHPVDTIAQVFQKGYKLHDRILRPAMVVVYN</sequence>
<proteinExistence type="inferred from homology"/>
<comment type="function">
    <text evidence="1">Participates actively in the response to hyperosmotic and heat shock by preventing the aggregation of stress-denatured proteins, in association with DnaK and GrpE. It is the nucleotide exchange factor for DnaK and may function as a thermosensor. Unfolded proteins bind initially to DnaJ; upon interaction with the DnaJ-bound protein, DnaK hydrolyzes its bound ATP, resulting in the formation of a stable complex. GrpE releases ADP from DnaK; ATP binding to DnaK triggers the release of the substrate protein, thus completing the reaction cycle. Several rounds of ATP-dependent interactions between DnaJ, DnaK and GrpE are required for fully efficient folding.</text>
</comment>
<comment type="subunit">
    <text evidence="1">Homodimer.</text>
</comment>
<comment type="subcellular location">
    <subcellularLocation>
        <location evidence="1">Cytoplasm</location>
    </subcellularLocation>
</comment>
<comment type="similarity">
    <text evidence="1">Belongs to the GrpE family.</text>
</comment>